<dbReference type="EC" id="7.4.2.5"/>
<dbReference type="EMBL" id="AF314517">
    <property type="protein sequence ID" value="AAL12797.1"/>
    <property type="molecule type" value="Genomic_DNA"/>
</dbReference>
<dbReference type="EMBL" id="AF314518">
    <property type="protein sequence ID" value="AAL12800.1"/>
    <property type="molecule type" value="Genomic_DNA"/>
</dbReference>
<dbReference type="EMBL" id="AF314519">
    <property type="protein sequence ID" value="AAL12803.1"/>
    <property type="molecule type" value="Genomic_DNA"/>
</dbReference>
<dbReference type="EMBL" id="AF314520">
    <property type="protein sequence ID" value="AAL12806.1"/>
    <property type="molecule type" value="Genomic_DNA"/>
</dbReference>
<dbReference type="EMBL" id="AF314521">
    <property type="protein sequence ID" value="AAL12808.1"/>
    <property type="molecule type" value="Genomic_DNA"/>
</dbReference>
<dbReference type="EMBL" id="AF314522">
    <property type="protein sequence ID" value="AAL12811.1"/>
    <property type="molecule type" value="Genomic_DNA"/>
</dbReference>
<dbReference type="RefSeq" id="WP_409500750.1">
    <property type="nucleotide sequence ID" value="NZ_CP176502.1"/>
</dbReference>
<dbReference type="SMR" id="Q933I3"/>
<dbReference type="GO" id="GO:0005886">
    <property type="term" value="C:plasma membrane"/>
    <property type="evidence" value="ECO:0007669"/>
    <property type="project" value="UniProtKB-SubCell"/>
</dbReference>
<dbReference type="GO" id="GO:0030256">
    <property type="term" value="C:type I protein secretion system complex"/>
    <property type="evidence" value="ECO:0007669"/>
    <property type="project" value="InterPro"/>
</dbReference>
<dbReference type="GO" id="GO:0140359">
    <property type="term" value="F:ABC-type transporter activity"/>
    <property type="evidence" value="ECO:0007669"/>
    <property type="project" value="InterPro"/>
</dbReference>
<dbReference type="GO" id="GO:0005524">
    <property type="term" value="F:ATP binding"/>
    <property type="evidence" value="ECO:0007669"/>
    <property type="project" value="UniProtKB-KW"/>
</dbReference>
<dbReference type="GO" id="GO:0016887">
    <property type="term" value="F:ATP hydrolysis activity"/>
    <property type="evidence" value="ECO:0007669"/>
    <property type="project" value="InterPro"/>
</dbReference>
<dbReference type="GO" id="GO:0034040">
    <property type="term" value="F:ATPase-coupled lipid transmembrane transporter activity"/>
    <property type="evidence" value="ECO:0007669"/>
    <property type="project" value="TreeGrafter"/>
</dbReference>
<dbReference type="GO" id="GO:0030253">
    <property type="term" value="P:protein secretion by the type I secretion system"/>
    <property type="evidence" value="ECO:0007669"/>
    <property type="project" value="InterPro"/>
</dbReference>
<dbReference type="GO" id="GO:0006508">
    <property type="term" value="P:proteolysis"/>
    <property type="evidence" value="ECO:0007669"/>
    <property type="project" value="InterPro"/>
</dbReference>
<dbReference type="CDD" id="cd18588">
    <property type="entry name" value="ABC_6TM_CyaB_HlyB_like"/>
    <property type="match status" value="1"/>
</dbReference>
<dbReference type="CDD" id="cd03252">
    <property type="entry name" value="ABCC_Hemolysin"/>
    <property type="match status" value="1"/>
</dbReference>
<dbReference type="CDD" id="cd02417">
    <property type="entry name" value="Peptidase_C39_likeA"/>
    <property type="match status" value="1"/>
</dbReference>
<dbReference type="FunFam" id="3.40.50.300:FF:000299">
    <property type="entry name" value="ABC transporter ATP-binding protein/permease"/>
    <property type="match status" value="1"/>
</dbReference>
<dbReference type="FunFam" id="1.20.1560.10:FF:000056">
    <property type="entry name" value="Alpha-hemolysin translocation ATP-binding protein HlyB"/>
    <property type="match status" value="1"/>
</dbReference>
<dbReference type="Gene3D" id="1.20.1560.10">
    <property type="entry name" value="ABC transporter type 1, transmembrane domain"/>
    <property type="match status" value="1"/>
</dbReference>
<dbReference type="Gene3D" id="3.90.70.10">
    <property type="entry name" value="Cysteine proteinases"/>
    <property type="match status" value="1"/>
</dbReference>
<dbReference type="Gene3D" id="3.40.50.300">
    <property type="entry name" value="P-loop containing nucleotide triphosphate hydrolases"/>
    <property type="match status" value="1"/>
</dbReference>
<dbReference type="InterPro" id="IPR003593">
    <property type="entry name" value="AAA+_ATPase"/>
</dbReference>
<dbReference type="InterPro" id="IPR011527">
    <property type="entry name" value="ABC1_TM_dom"/>
</dbReference>
<dbReference type="InterPro" id="IPR036640">
    <property type="entry name" value="ABC1_TM_sf"/>
</dbReference>
<dbReference type="InterPro" id="IPR003439">
    <property type="entry name" value="ABC_transporter-like_ATP-bd"/>
</dbReference>
<dbReference type="InterPro" id="IPR017871">
    <property type="entry name" value="ABC_transporter-like_CS"/>
</dbReference>
<dbReference type="InterPro" id="IPR010132">
    <property type="entry name" value="ATPase_T1SS_HlyB"/>
</dbReference>
<dbReference type="InterPro" id="IPR027417">
    <property type="entry name" value="P-loop_NTPase"/>
</dbReference>
<dbReference type="InterPro" id="IPR005074">
    <property type="entry name" value="Peptidase_C39"/>
</dbReference>
<dbReference type="InterPro" id="IPR039395">
    <property type="entry name" value="Peptidase_C39-like_A"/>
</dbReference>
<dbReference type="InterPro" id="IPR039421">
    <property type="entry name" value="Type_1_exporter"/>
</dbReference>
<dbReference type="NCBIfam" id="TIGR01846">
    <property type="entry name" value="type_I_sec_HlyB"/>
    <property type="match status" value="1"/>
</dbReference>
<dbReference type="PANTHER" id="PTHR24221">
    <property type="entry name" value="ATP-BINDING CASSETTE SUB-FAMILY B"/>
    <property type="match status" value="1"/>
</dbReference>
<dbReference type="PANTHER" id="PTHR24221:SF647">
    <property type="entry name" value="BLL6336 PROTEIN"/>
    <property type="match status" value="1"/>
</dbReference>
<dbReference type="Pfam" id="PF00664">
    <property type="entry name" value="ABC_membrane"/>
    <property type="match status" value="1"/>
</dbReference>
<dbReference type="Pfam" id="PF00005">
    <property type="entry name" value="ABC_tran"/>
    <property type="match status" value="1"/>
</dbReference>
<dbReference type="Pfam" id="PF03412">
    <property type="entry name" value="Peptidase_C39"/>
    <property type="match status" value="1"/>
</dbReference>
<dbReference type="SMART" id="SM00382">
    <property type="entry name" value="AAA"/>
    <property type="match status" value="1"/>
</dbReference>
<dbReference type="SUPFAM" id="SSF90123">
    <property type="entry name" value="ABC transporter transmembrane region"/>
    <property type="match status" value="1"/>
</dbReference>
<dbReference type="SUPFAM" id="SSF52540">
    <property type="entry name" value="P-loop containing nucleoside triphosphate hydrolases"/>
    <property type="match status" value="1"/>
</dbReference>
<dbReference type="PROSITE" id="PS50929">
    <property type="entry name" value="ABC_TM1F"/>
    <property type="match status" value="1"/>
</dbReference>
<dbReference type="PROSITE" id="PS00211">
    <property type="entry name" value="ABC_TRANSPORTER_1"/>
    <property type="match status" value="1"/>
</dbReference>
<dbReference type="PROSITE" id="PS50893">
    <property type="entry name" value="ABC_TRANSPORTER_2"/>
    <property type="match status" value="1"/>
</dbReference>
<dbReference type="PROSITE" id="PS50990">
    <property type="entry name" value="PEPTIDASE_C39"/>
    <property type="match status" value="1"/>
</dbReference>
<feature type="chain" id="PRO_0000092378" description="Leukotoxin translocation ATP-binding protein LktB">
    <location>
        <begin position="1"/>
        <end position="708"/>
    </location>
</feature>
<feature type="transmembrane region" description="Helical" evidence="4">
    <location>
        <begin position="159"/>
        <end position="179"/>
    </location>
</feature>
<feature type="transmembrane region" description="Helical" evidence="4">
    <location>
        <begin position="192"/>
        <end position="212"/>
    </location>
</feature>
<feature type="transmembrane region" description="Helical" evidence="4">
    <location>
        <begin position="270"/>
        <end position="290"/>
    </location>
</feature>
<feature type="transmembrane region" description="Helical" evidence="4">
    <location>
        <begin position="296"/>
        <end position="316"/>
    </location>
</feature>
<feature type="transmembrane region" description="Helical" evidence="4">
    <location>
        <begin position="389"/>
        <end position="409"/>
    </location>
</feature>
<feature type="domain" description="Peptidase C39" evidence="2">
    <location>
        <begin position="1"/>
        <end position="126"/>
    </location>
</feature>
<feature type="domain" description="ABC transmembrane type-1" evidence="4">
    <location>
        <begin position="155"/>
        <end position="437"/>
    </location>
</feature>
<feature type="domain" description="ABC transporter" evidence="2 3">
    <location>
        <begin position="469"/>
        <end position="704"/>
    </location>
</feature>
<feature type="binding site" evidence="2 3">
    <location>
        <begin position="503"/>
        <end position="510"/>
    </location>
    <ligand>
        <name>ATP</name>
        <dbReference type="ChEBI" id="CHEBI:30616"/>
    </ligand>
</feature>
<feature type="sequence variant" description="In strain: Serotype A11 / PH240 and Serotype UG3 / PH496.">
    <original>N</original>
    <variation>K</variation>
    <location>
        <position position="40"/>
    </location>
</feature>
<feature type="sequence variant" description="In strain: Serotype UG3 / PH496.">
    <original>G</original>
    <variation>E</variation>
    <location>
        <position position="121"/>
    </location>
</feature>
<feature type="sequence variant" description="In strain: Serotype A11 / PH498.">
    <original>L</original>
    <variation>F</variation>
    <location>
        <position position="232"/>
    </location>
</feature>
<sequence length="708" mass="79659">MEANHQRNDLGLVALTMLAQYHNISLNPEEIKHKFDLDGNGLSLTSWLLAAKSLALKAKHIKKEISRLHLVNLPALVWQDNGKHFLLVKVDTDNNRYLTYNLEQDAPQILSQDEFEACYQGQLILVTSRASVVGQLAKFDFTWFIPAVIKYRKIFLETLIVSIFLQIFALITPLFFQVVMDKVLVHRGFSTLNIITVALAIVIIFEIVLSGLRTYVFSHSTSRIDVELGAKLFRHLLSLPISYFENRRVGDTVARVRELDQIRNFLTGQALTSVLDLLFSFIFFAVMWYYSPKLTLVILGSLPCYILWSIFISPILRRRLDEKFARSADNQAFLVESVTAINMIKAMAVAPQMTDTWDKQLASYVSSSFRVTVLATIGQQGVQLIQKTVMVINLWLGAHLVISGDLSIGQLIAFNMLSGQVIAPVIRLAQLWQDFQQVGISVTRLGDVLNSPTEQYQGKLSLPEIQGDIAFKNIRFRYKPDAPTILNNVNLEIKKGEVIGIVGRSGSGKSTLTKLLQRFYIPENGQVLIDGHDLALADPNWLRRQIGVVLQDNVLLNRSIRENIALSEPGMSMERVIYAAKLAGAHDFISELREGYNTIVGEQGAGLSGGQRQRIAIARALVNNPKILIFDEATSALDYESEHIIMQNMQKICQGRTVILIAHRLSTVKNADRIIVMEKGEIVEQGKHHELLQNSNGLYSYLHQLQLN</sequence>
<protein>
    <recommendedName>
        <fullName>Leukotoxin translocation ATP-binding protein LktB</fullName>
        <ecNumber>7.4.2.5</ecNumber>
    </recommendedName>
</protein>
<organism>
    <name type="scientific">Mannheimia glucosida</name>
    <dbReference type="NCBI Taxonomy" id="85401"/>
    <lineage>
        <taxon>Bacteria</taxon>
        <taxon>Pseudomonadati</taxon>
        <taxon>Pseudomonadota</taxon>
        <taxon>Gammaproteobacteria</taxon>
        <taxon>Pasteurellales</taxon>
        <taxon>Pasteurellaceae</taxon>
        <taxon>Mannheimia</taxon>
    </lineage>
</organism>
<reference key="1">
    <citation type="journal article" date="2002" name="J. Bacteriol.">
        <title>Mosaic structure and molecular evolution of the leukotoxin operon (lktCABD) in Mannheimia (Pasteurella) haemolytica, Mannheimia glucosida, and Pasteurella trehalosi.</title>
        <authorList>
            <person name="Davies R.L."/>
            <person name="Campbell S."/>
            <person name="Whittam T.S."/>
        </authorList>
    </citation>
    <scope>NUCLEOTIDE SEQUENCE [GENOMIC DNA]</scope>
    <source>
        <strain>Serotype A11 / PH240</strain>
        <strain>Serotype A11 / PH344</strain>
        <strain>Serotype A11 / PH498</strain>
        <strain>Serotype UG3 / PH290</strain>
        <strain>Serotype UG3 / PH496</strain>
        <strain>Serotype UG3 / PH574</strain>
    </source>
</reference>
<comment type="function">
    <text evidence="5">Part of the ABC transporter complex LktBD involved in leukotoxin export. Transmembrane domains (TMD) form a pore in the inner membrane and the ATP-binding domain (NBD) is responsible for energy generation (Probable).</text>
</comment>
<comment type="catalytic activity">
    <reaction>
        <text>ATP + H2O + proteinSide 1 = ADP + phosphate + proteinSide 2.</text>
        <dbReference type="EC" id="7.4.2.5"/>
    </reaction>
</comment>
<comment type="subunit">
    <text evidence="1">Homodimer.</text>
</comment>
<comment type="subcellular location">
    <subcellularLocation>
        <location evidence="5">Cell inner membrane</location>
        <topology evidence="5">Multi-pass membrane protein</topology>
    </subcellularLocation>
</comment>
<comment type="domain">
    <text>In LktB the peptidase C39 domain, the ATP-binding domain (NBD) and the transmembrane domain (TMD) are fused.</text>
</comment>
<comment type="similarity">
    <text evidence="5">Belongs to the ABC transporter superfamily. Protein-1 exporter (TC 3.A.1.109) family.</text>
</comment>
<comment type="caution">
    <text evidence="5">Leu-10 is present instead of the conserved Cys which is expected to be the active site residue of peptidase C39. Thus this protein is presumed to be without peptidase activity.</text>
</comment>
<name>LKTB_MANGL</name>
<gene>
    <name type="primary">lktB</name>
</gene>
<accession>Q933I3</accession>
<accession>Q93FG2</accession>
<accession>Q93FG4</accession>
<accession>Q93FG5</accession>
<proteinExistence type="inferred from homology"/>
<evidence type="ECO:0000250" key="1"/>
<evidence type="ECO:0000255" key="2">
    <source>
        <dbReference type="PROSITE-ProRule" id="PRU00362"/>
    </source>
</evidence>
<evidence type="ECO:0000255" key="3">
    <source>
        <dbReference type="PROSITE-ProRule" id="PRU00434"/>
    </source>
</evidence>
<evidence type="ECO:0000255" key="4">
    <source>
        <dbReference type="PROSITE-ProRule" id="PRU00441"/>
    </source>
</evidence>
<evidence type="ECO:0000305" key="5"/>
<keyword id="KW-0067">ATP-binding</keyword>
<keyword id="KW-0997">Cell inner membrane</keyword>
<keyword id="KW-1003">Cell membrane</keyword>
<keyword id="KW-0472">Membrane</keyword>
<keyword id="KW-0547">Nucleotide-binding</keyword>
<keyword id="KW-1278">Translocase</keyword>
<keyword id="KW-0812">Transmembrane</keyword>
<keyword id="KW-1133">Transmembrane helix</keyword>
<keyword id="KW-0813">Transport</keyword>